<gene>
    <name evidence="1" type="primary">rplF</name>
    <name evidence="1" type="synonym">rpl6</name>
    <name type="ordered locus">tlr0095</name>
</gene>
<evidence type="ECO:0000255" key="1">
    <source>
        <dbReference type="HAMAP-Rule" id="MF_01365"/>
    </source>
</evidence>
<evidence type="ECO:0000305" key="2"/>
<feature type="chain" id="PRO_0000260959" description="Large ribosomal subunit protein uL6">
    <location>
        <begin position="1"/>
        <end position="187"/>
    </location>
</feature>
<accession>Q8DML8</accession>
<proteinExistence type="inferred from homology"/>
<name>RL6_THEVB</name>
<dbReference type="EMBL" id="BA000039">
    <property type="protein sequence ID" value="BAC07648.1"/>
    <property type="molecule type" value="Genomic_DNA"/>
</dbReference>
<dbReference type="RefSeq" id="NP_680886.1">
    <property type="nucleotide sequence ID" value="NC_004113.1"/>
</dbReference>
<dbReference type="RefSeq" id="WP_011055950.1">
    <property type="nucleotide sequence ID" value="NC_004113.1"/>
</dbReference>
<dbReference type="SMR" id="Q8DML8"/>
<dbReference type="STRING" id="197221.gene:10746673"/>
<dbReference type="EnsemblBacteria" id="BAC07648">
    <property type="protein sequence ID" value="BAC07648"/>
    <property type="gene ID" value="BAC07648"/>
</dbReference>
<dbReference type="KEGG" id="tel:tlr0095"/>
<dbReference type="PATRIC" id="fig|197221.4.peg.98"/>
<dbReference type="eggNOG" id="COG0097">
    <property type="taxonomic scope" value="Bacteria"/>
</dbReference>
<dbReference type="Proteomes" id="UP000000440">
    <property type="component" value="Chromosome"/>
</dbReference>
<dbReference type="GO" id="GO:0022625">
    <property type="term" value="C:cytosolic large ribosomal subunit"/>
    <property type="evidence" value="ECO:0007669"/>
    <property type="project" value="TreeGrafter"/>
</dbReference>
<dbReference type="GO" id="GO:0019843">
    <property type="term" value="F:rRNA binding"/>
    <property type="evidence" value="ECO:0007669"/>
    <property type="project" value="UniProtKB-UniRule"/>
</dbReference>
<dbReference type="GO" id="GO:0003735">
    <property type="term" value="F:structural constituent of ribosome"/>
    <property type="evidence" value="ECO:0007669"/>
    <property type="project" value="InterPro"/>
</dbReference>
<dbReference type="GO" id="GO:0002181">
    <property type="term" value="P:cytoplasmic translation"/>
    <property type="evidence" value="ECO:0007669"/>
    <property type="project" value="TreeGrafter"/>
</dbReference>
<dbReference type="FunFam" id="3.90.930.12:FF:000001">
    <property type="entry name" value="50S ribosomal protein L6"/>
    <property type="match status" value="1"/>
</dbReference>
<dbReference type="FunFam" id="3.90.930.12:FF:000002">
    <property type="entry name" value="50S ribosomal protein L6"/>
    <property type="match status" value="1"/>
</dbReference>
<dbReference type="Gene3D" id="3.90.930.12">
    <property type="entry name" value="Ribosomal protein L6, alpha-beta domain"/>
    <property type="match status" value="2"/>
</dbReference>
<dbReference type="HAMAP" id="MF_01365_B">
    <property type="entry name" value="Ribosomal_uL6_B"/>
    <property type="match status" value="1"/>
</dbReference>
<dbReference type="InterPro" id="IPR000702">
    <property type="entry name" value="Ribosomal_uL6-like"/>
</dbReference>
<dbReference type="InterPro" id="IPR036789">
    <property type="entry name" value="Ribosomal_uL6-like_a/b-dom_sf"/>
</dbReference>
<dbReference type="InterPro" id="IPR020040">
    <property type="entry name" value="Ribosomal_uL6_a/b-dom"/>
</dbReference>
<dbReference type="InterPro" id="IPR019906">
    <property type="entry name" value="Ribosomal_uL6_bac-type"/>
</dbReference>
<dbReference type="InterPro" id="IPR002358">
    <property type="entry name" value="Ribosomal_uL6_CS"/>
</dbReference>
<dbReference type="NCBIfam" id="TIGR03654">
    <property type="entry name" value="L6_bact"/>
    <property type="match status" value="1"/>
</dbReference>
<dbReference type="PANTHER" id="PTHR11655">
    <property type="entry name" value="60S/50S RIBOSOMAL PROTEIN L6/L9"/>
    <property type="match status" value="1"/>
</dbReference>
<dbReference type="PANTHER" id="PTHR11655:SF14">
    <property type="entry name" value="LARGE RIBOSOMAL SUBUNIT PROTEIN UL6M"/>
    <property type="match status" value="1"/>
</dbReference>
<dbReference type="Pfam" id="PF00347">
    <property type="entry name" value="Ribosomal_L6"/>
    <property type="match status" value="2"/>
</dbReference>
<dbReference type="PIRSF" id="PIRSF002162">
    <property type="entry name" value="Ribosomal_L6"/>
    <property type="match status" value="1"/>
</dbReference>
<dbReference type="PRINTS" id="PR00059">
    <property type="entry name" value="RIBOSOMALL6"/>
</dbReference>
<dbReference type="SUPFAM" id="SSF56053">
    <property type="entry name" value="Ribosomal protein L6"/>
    <property type="match status" value="2"/>
</dbReference>
<dbReference type="PROSITE" id="PS00525">
    <property type="entry name" value="RIBOSOMAL_L6_1"/>
    <property type="match status" value="1"/>
</dbReference>
<reference key="1">
    <citation type="journal article" date="2002" name="DNA Res.">
        <title>Complete genome structure of the thermophilic cyanobacterium Thermosynechococcus elongatus BP-1.</title>
        <authorList>
            <person name="Nakamura Y."/>
            <person name="Kaneko T."/>
            <person name="Sato S."/>
            <person name="Ikeuchi M."/>
            <person name="Katoh H."/>
            <person name="Sasamoto S."/>
            <person name="Watanabe A."/>
            <person name="Iriguchi M."/>
            <person name="Kawashima K."/>
            <person name="Kimura T."/>
            <person name="Kishida Y."/>
            <person name="Kiyokawa C."/>
            <person name="Kohara M."/>
            <person name="Matsumoto M."/>
            <person name="Matsuno A."/>
            <person name="Nakazaki N."/>
            <person name="Shimpo S."/>
            <person name="Sugimoto M."/>
            <person name="Takeuchi C."/>
            <person name="Yamada M."/>
            <person name="Tabata S."/>
        </authorList>
    </citation>
    <scope>NUCLEOTIDE SEQUENCE [LARGE SCALE GENOMIC DNA]</scope>
    <source>
        <strain>NIES-2133 / IAM M-273 / BP-1</strain>
    </source>
</reference>
<sequence>MSRIGKRPIPLPKNVTLTLDGQQVTVKGPKGQLSRVFPPEVNVVQEGEAIVVKRRDDSRPAKERHGLCRTLLANMVEGVSQGFTKKLEIQGVGYRAQLQGKTLVLSMGYSHPVEIVPPEGITLEIEDNQGKKVQQGTIVLVSGIDKELVGNTSARIRAVRPPEPYKGKGIRYMGEFVRRKVGKTGKK</sequence>
<organism>
    <name type="scientific">Thermosynechococcus vestitus (strain NIES-2133 / IAM M-273 / BP-1)</name>
    <dbReference type="NCBI Taxonomy" id="197221"/>
    <lineage>
        <taxon>Bacteria</taxon>
        <taxon>Bacillati</taxon>
        <taxon>Cyanobacteriota</taxon>
        <taxon>Cyanophyceae</taxon>
        <taxon>Acaryochloridales</taxon>
        <taxon>Thermosynechococcaceae</taxon>
        <taxon>Thermosynechococcus</taxon>
    </lineage>
</organism>
<comment type="function">
    <text evidence="1">This protein binds to the 23S rRNA, and is important in its secondary structure. It is located near the subunit interface in the base of the L7/L12 stalk, and near the tRNA binding site of the peptidyltransferase center.</text>
</comment>
<comment type="subunit">
    <text evidence="1">Part of the 50S ribosomal subunit.</text>
</comment>
<comment type="similarity">
    <text evidence="1">Belongs to the universal ribosomal protein uL6 family.</text>
</comment>
<keyword id="KW-1185">Reference proteome</keyword>
<keyword id="KW-0687">Ribonucleoprotein</keyword>
<keyword id="KW-0689">Ribosomal protein</keyword>
<keyword id="KW-0694">RNA-binding</keyword>
<keyword id="KW-0699">rRNA-binding</keyword>
<protein>
    <recommendedName>
        <fullName evidence="1">Large ribosomal subunit protein uL6</fullName>
    </recommendedName>
    <alternativeName>
        <fullName evidence="2">50S ribosomal protein L6</fullName>
    </alternativeName>
</protein>